<proteinExistence type="inferred from homology"/>
<evidence type="ECO:0000255" key="1">
    <source>
        <dbReference type="HAMAP-Rule" id="MF_01844"/>
    </source>
</evidence>
<dbReference type="EMBL" id="CP000510">
    <property type="protein sequence ID" value="ABM02089.1"/>
    <property type="molecule type" value="Genomic_DNA"/>
</dbReference>
<dbReference type="RefSeq" id="WP_011768648.1">
    <property type="nucleotide sequence ID" value="NC_008709.1"/>
</dbReference>
<dbReference type="SMR" id="A1SRH4"/>
<dbReference type="STRING" id="357804.Ping_0222"/>
<dbReference type="KEGG" id="pin:Ping_0222"/>
<dbReference type="eggNOG" id="COG3004">
    <property type="taxonomic scope" value="Bacteria"/>
</dbReference>
<dbReference type="HOGENOM" id="CLU_015803_1_2_6"/>
<dbReference type="Proteomes" id="UP000000639">
    <property type="component" value="Chromosome"/>
</dbReference>
<dbReference type="GO" id="GO:0005886">
    <property type="term" value="C:plasma membrane"/>
    <property type="evidence" value="ECO:0007669"/>
    <property type="project" value="UniProtKB-SubCell"/>
</dbReference>
<dbReference type="GO" id="GO:0015385">
    <property type="term" value="F:sodium:proton antiporter activity"/>
    <property type="evidence" value="ECO:0007669"/>
    <property type="project" value="TreeGrafter"/>
</dbReference>
<dbReference type="GO" id="GO:0006885">
    <property type="term" value="P:regulation of pH"/>
    <property type="evidence" value="ECO:0007669"/>
    <property type="project" value="InterPro"/>
</dbReference>
<dbReference type="Gene3D" id="1.20.1530.10">
    <property type="entry name" value="Na+/H+ antiporter like domain"/>
    <property type="match status" value="1"/>
</dbReference>
<dbReference type="HAMAP" id="MF_01844">
    <property type="entry name" value="NhaA"/>
    <property type="match status" value="1"/>
</dbReference>
<dbReference type="InterPro" id="IPR023171">
    <property type="entry name" value="Na/H_antiporter_dom_sf"/>
</dbReference>
<dbReference type="InterPro" id="IPR004670">
    <property type="entry name" value="NhaA"/>
</dbReference>
<dbReference type="NCBIfam" id="TIGR00773">
    <property type="entry name" value="NhaA"/>
    <property type="match status" value="1"/>
</dbReference>
<dbReference type="PANTHER" id="PTHR30341:SF0">
    <property type="entry name" value="NA(+)_H(+) ANTIPORTER NHAA"/>
    <property type="match status" value="1"/>
</dbReference>
<dbReference type="PANTHER" id="PTHR30341">
    <property type="entry name" value="SODIUM ION/PROTON ANTIPORTER NHAA-RELATED"/>
    <property type="match status" value="1"/>
</dbReference>
<dbReference type="Pfam" id="PF06965">
    <property type="entry name" value="Na_H_antiport_1"/>
    <property type="match status" value="1"/>
</dbReference>
<accession>A1SRH4</accession>
<organism>
    <name type="scientific">Psychromonas ingrahamii (strain DSM 17664 / CCUG 51855 / 37)</name>
    <dbReference type="NCBI Taxonomy" id="357804"/>
    <lineage>
        <taxon>Bacteria</taxon>
        <taxon>Pseudomonadati</taxon>
        <taxon>Pseudomonadota</taxon>
        <taxon>Gammaproteobacteria</taxon>
        <taxon>Alteromonadales</taxon>
        <taxon>Psychromonadaceae</taxon>
        <taxon>Psychromonas</taxon>
    </lineage>
</organism>
<gene>
    <name evidence="1" type="primary">nhaA2</name>
    <name type="ordered locus">Ping_0222</name>
</gene>
<feature type="chain" id="PRO_0000334385" description="Na(+)/H(+) antiporter NhaA 2">
    <location>
        <begin position="1"/>
        <end position="475"/>
    </location>
</feature>
<feature type="transmembrane region" description="Helical" evidence="1">
    <location>
        <begin position="44"/>
        <end position="64"/>
    </location>
</feature>
<feature type="transmembrane region" description="Helical" evidence="1">
    <location>
        <begin position="92"/>
        <end position="112"/>
    </location>
</feature>
<feature type="transmembrane region" description="Helical" evidence="1">
    <location>
        <begin position="130"/>
        <end position="150"/>
    </location>
</feature>
<feature type="transmembrane region" description="Helical" evidence="1">
    <location>
        <begin position="156"/>
        <end position="176"/>
    </location>
</feature>
<feature type="transmembrane region" description="Helical" evidence="1">
    <location>
        <begin position="186"/>
        <end position="206"/>
    </location>
</feature>
<feature type="transmembrane region" description="Helical" evidence="1">
    <location>
        <begin position="211"/>
        <end position="231"/>
    </location>
</feature>
<feature type="transmembrane region" description="Helical" evidence="1">
    <location>
        <begin position="232"/>
        <end position="252"/>
    </location>
</feature>
<feature type="transmembrane region" description="Helical" evidence="1">
    <location>
        <begin position="255"/>
        <end position="275"/>
    </location>
</feature>
<feature type="transmembrane region" description="Helical" evidence="1">
    <location>
        <begin position="331"/>
        <end position="351"/>
    </location>
</feature>
<feature type="transmembrane region" description="Helical" evidence="1">
    <location>
        <begin position="368"/>
        <end position="388"/>
    </location>
</feature>
<feature type="transmembrane region" description="Helical" evidence="1">
    <location>
        <begin position="406"/>
        <end position="426"/>
    </location>
</feature>
<feature type="transmembrane region" description="Helical" evidence="1">
    <location>
        <begin position="442"/>
        <end position="462"/>
    </location>
</feature>
<protein>
    <recommendedName>
        <fullName evidence="1">Na(+)/H(+) antiporter NhaA 2</fullName>
    </recommendedName>
    <alternativeName>
        <fullName evidence="1">Sodium/proton antiporter NhaA 2</fullName>
    </alternativeName>
</protein>
<sequence length="475" mass="51775">MNLRIVYLRSLNIQGLTKMTDDKNNLLHRGLDNIQPPFSNFIRAQATASVFLLVATITALWWANSDYSSTYQMLKHMQIGFFLGDIELQASLKHIINDGLMVIFFFFIGLEIKREVLAGDLAIAENRRMLILCALGGMICPAVIYSLFNWSLDSQIGWGIPMATDTAFALGALTLVRKHIPISLLAFLVGLAIVDDVGAIVVIALFYTQEISVIFLSISFSLIAFLAIANYAGVLRPIFYILIGIAAWWTMLKSGVHPTFAGVAIALTVPARPMLPPDELLSKVKAKITAMKKNKGHQLDALANREDHEQVLDVRDFAEHGSAPLRRWEDALDLPVSLFVLPLFALVNAGVEVSFSSLIETLQHSVGLGIVIGLVIGKFVGISGACWLGLRYKIGSLPEGINMQHVIGMSLIAGIGFTMSTFIATLGFDSQPEYLQSAKGSILFASLLSAILGLLYLRIIAAKKAPNSASKNGEN</sequence>
<keyword id="KW-0050">Antiport</keyword>
<keyword id="KW-0997">Cell inner membrane</keyword>
<keyword id="KW-1003">Cell membrane</keyword>
<keyword id="KW-0406">Ion transport</keyword>
<keyword id="KW-0472">Membrane</keyword>
<keyword id="KW-1185">Reference proteome</keyword>
<keyword id="KW-0915">Sodium</keyword>
<keyword id="KW-0739">Sodium transport</keyword>
<keyword id="KW-0812">Transmembrane</keyword>
<keyword id="KW-1133">Transmembrane helix</keyword>
<keyword id="KW-0813">Transport</keyword>
<name>NHAA2_PSYIN</name>
<reference key="1">
    <citation type="journal article" date="2008" name="BMC Genomics">
        <title>Genomics of an extreme psychrophile, Psychromonas ingrahamii.</title>
        <authorList>
            <person name="Riley M."/>
            <person name="Staley J.T."/>
            <person name="Danchin A."/>
            <person name="Wang T.Z."/>
            <person name="Brettin T.S."/>
            <person name="Hauser L.J."/>
            <person name="Land M.L."/>
            <person name="Thompson L.S."/>
        </authorList>
    </citation>
    <scope>NUCLEOTIDE SEQUENCE [LARGE SCALE GENOMIC DNA]</scope>
    <source>
        <strain>DSM 17664 / CCUG 51855 / 37</strain>
    </source>
</reference>
<comment type="function">
    <text evidence="1">Na(+)/H(+) antiporter that extrudes sodium in exchange for external protons.</text>
</comment>
<comment type="catalytic activity">
    <reaction evidence="1">
        <text>Na(+)(in) + 2 H(+)(out) = Na(+)(out) + 2 H(+)(in)</text>
        <dbReference type="Rhea" id="RHEA:29251"/>
        <dbReference type="ChEBI" id="CHEBI:15378"/>
        <dbReference type="ChEBI" id="CHEBI:29101"/>
    </reaction>
    <physiologicalReaction direction="left-to-right" evidence="1">
        <dbReference type="Rhea" id="RHEA:29252"/>
    </physiologicalReaction>
</comment>
<comment type="subcellular location">
    <subcellularLocation>
        <location evidence="1">Cell inner membrane</location>
        <topology evidence="1">Multi-pass membrane protein</topology>
    </subcellularLocation>
</comment>
<comment type="similarity">
    <text evidence="1">Belongs to the NhaA Na(+)/H(+) (TC 2.A.33) antiporter family.</text>
</comment>